<evidence type="ECO:0000255" key="1">
    <source>
        <dbReference type="HAMAP-Rule" id="MF_01522"/>
    </source>
</evidence>
<keyword id="KW-1003">Cell membrane</keyword>
<keyword id="KW-0406">Ion transport</keyword>
<keyword id="KW-0472">Membrane</keyword>
<keyword id="KW-0630">Potassium</keyword>
<keyword id="KW-0633">Potassium transport</keyword>
<keyword id="KW-1185">Reference proteome</keyword>
<keyword id="KW-0769">Symport</keyword>
<keyword id="KW-0812">Transmembrane</keyword>
<keyword id="KW-1133">Transmembrane helix</keyword>
<keyword id="KW-0813">Transport</keyword>
<protein>
    <recommendedName>
        <fullName evidence="1">Probable potassium transport system protein Kup</fullName>
    </recommendedName>
</protein>
<accession>Q03S07</accession>
<name>KUP_LEVBA</name>
<proteinExistence type="inferred from homology"/>
<reference key="1">
    <citation type="journal article" date="2006" name="Proc. Natl. Acad. Sci. U.S.A.">
        <title>Comparative genomics of the lactic acid bacteria.</title>
        <authorList>
            <person name="Makarova K.S."/>
            <person name="Slesarev A."/>
            <person name="Wolf Y.I."/>
            <person name="Sorokin A."/>
            <person name="Mirkin B."/>
            <person name="Koonin E.V."/>
            <person name="Pavlov A."/>
            <person name="Pavlova N."/>
            <person name="Karamychev V."/>
            <person name="Polouchine N."/>
            <person name="Shakhova V."/>
            <person name="Grigoriev I."/>
            <person name="Lou Y."/>
            <person name="Rohksar D."/>
            <person name="Lucas S."/>
            <person name="Huang K."/>
            <person name="Goodstein D.M."/>
            <person name="Hawkins T."/>
            <person name="Plengvidhya V."/>
            <person name="Welker D."/>
            <person name="Hughes J."/>
            <person name="Goh Y."/>
            <person name="Benson A."/>
            <person name="Baldwin K."/>
            <person name="Lee J.-H."/>
            <person name="Diaz-Muniz I."/>
            <person name="Dosti B."/>
            <person name="Smeianov V."/>
            <person name="Wechter W."/>
            <person name="Barabote R."/>
            <person name="Lorca G."/>
            <person name="Altermann E."/>
            <person name="Barrangou R."/>
            <person name="Ganesan B."/>
            <person name="Xie Y."/>
            <person name="Rawsthorne H."/>
            <person name="Tamir D."/>
            <person name="Parker C."/>
            <person name="Breidt F."/>
            <person name="Broadbent J.R."/>
            <person name="Hutkins R."/>
            <person name="O'Sullivan D."/>
            <person name="Steele J."/>
            <person name="Unlu G."/>
            <person name="Saier M.H. Jr."/>
            <person name="Klaenhammer T."/>
            <person name="Richardson P."/>
            <person name="Kozyavkin S."/>
            <person name="Weimer B.C."/>
            <person name="Mills D.A."/>
        </authorList>
    </citation>
    <scope>NUCLEOTIDE SEQUENCE [LARGE SCALE GENOMIC DNA]</scope>
    <source>
        <strain>ATCC 367 / BCRC 12310 / CIP 105137 / JCM 1170 / LMG 11437 / NCIMB 947 / NCTC 947</strain>
    </source>
</reference>
<comment type="function">
    <text evidence="1">Transport of potassium into the cell. Likely operates as a K(+):H(+) symporter.</text>
</comment>
<comment type="catalytic activity">
    <reaction evidence="1">
        <text>K(+)(in) + H(+)(in) = K(+)(out) + H(+)(out)</text>
        <dbReference type="Rhea" id="RHEA:28490"/>
        <dbReference type="ChEBI" id="CHEBI:15378"/>
        <dbReference type="ChEBI" id="CHEBI:29103"/>
    </reaction>
    <physiologicalReaction direction="right-to-left" evidence="1">
        <dbReference type="Rhea" id="RHEA:28492"/>
    </physiologicalReaction>
</comment>
<comment type="subcellular location">
    <subcellularLocation>
        <location evidence="1">Cell membrane</location>
        <topology evidence="1">Multi-pass membrane protein</topology>
    </subcellularLocation>
</comment>
<comment type="similarity">
    <text evidence="1">Belongs to the HAK/KUP transporter (TC 2.A.72) family.</text>
</comment>
<sequence length="675" mass="75417">MRKERLEKGSWLGMLITLGVVYGDIGTSPLYVMNALINDAGPLKNATPDYVIGSVSLIFWTLMLITTVKYVLVALRADNHHEGGIFALYALVRHRAKWLIFVALIGGAALLADGTLTPAVTVTSAVEGLKGLPDLRAFSQYSWLVPLSVTLILVSLFTIQVLGTAVVGRSFGPMMLLWFIVIGGIGLLNISQAPAILRAFSPVYAIQVLFSPTNKMGIFILGSVFLATTGAEALYSDMGHVGKANIDATWPFVYAMLILNYLGQGAWMLTHSQGPAWRNVTNINPFYEMIPSGGRIAMIVLATVAAIIASQALITGSYTLVDEAVGLKFLPRMIIKHPSNVRSQIYIGAINWLLCLVTLSIVWLFQTSAHMEAAYGLAITLTMLMTTILLSQWVQMKGHRFWSLALLAGFGLLETLFLVASLTKFIHGGYLTLGLTLMIFLIMVVWFFGNRRRLRYNQADEQISLLNYRSQLIQLSQDDNQPLFATNLVYLAKVDQLHRVKRSILYSILDKRPKRAKVYWFITINETNRPYDCSYSVDMLGTRNVVEVRLNLGFRKSQHINRYLRAIVTSLIADHSIDPQYSNYGITQPRQVGDFKFVVQNQQIMDLAGNPTMHQFDRFLIGGRIFLQNITPSPAIWYGLEFSDVLEETIPLFTKPMTDPALVHLAKRQTTRHQV</sequence>
<dbReference type="EMBL" id="CP000416">
    <property type="protein sequence ID" value="ABJ64015.1"/>
    <property type="molecule type" value="Genomic_DNA"/>
</dbReference>
<dbReference type="RefSeq" id="WP_011667606.1">
    <property type="nucleotide sequence ID" value="NC_008497.1"/>
</dbReference>
<dbReference type="KEGG" id="lbr:LVIS_0875"/>
<dbReference type="eggNOG" id="COG3158">
    <property type="taxonomic scope" value="Bacteria"/>
</dbReference>
<dbReference type="HOGENOM" id="CLU_008142_4_1_9"/>
<dbReference type="Proteomes" id="UP000001652">
    <property type="component" value="Chromosome"/>
</dbReference>
<dbReference type="GO" id="GO:0005886">
    <property type="term" value="C:plasma membrane"/>
    <property type="evidence" value="ECO:0007669"/>
    <property type="project" value="UniProtKB-SubCell"/>
</dbReference>
<dbReference type="GO" id="GO:0015079">
    <property type="term" value="F:potassium ion transmembrane transporter activity"/>
    <property type="evidence" value="ECO:0007669"/>
    <property type="project" value="UniProtKB-UniRule"/>
</dbReference>
<dbReference type="GO" id="GO:0015293">
    <property type="term" value="F:symporter activity"/>
    <property type="evidence" value="ECO:0007669"/>
    <property type="project" value="UniProtKB-UniRule"/>
</dbReference>
<dbReference type="HAMAP" id="MF_01522">
    <property type="entry name" value="Kup"/>
    <property type="match status" value="1"/>
</dbReference>
<dbReference type="InterPro" id="IPR003855">
    <property type="entry name" value="K+_transporter"/>
</dbReference>
<dbReference type="InterPro" id="IPR053952">
    <property type="entry name" value="K_trans_C"/>
</dbReference>
<dbReference type="InterPro" id="IPR053951">
    <property type="entry name" value="K_trans_N"/>
</dbReference>
<dbReference type="InterPro" id="IPR023051">
    <property type="entry name" value="Kup"/>
</dbReference>
<dbReference type="PANTHER" id="PTHR30540:SF83">
    <property type="entry name" value="K+ POTASSIUM TRANSPORTER"/>
    <property type="match status" value="1"/>
</dbReference>
<dbReference type="PANTHER" id="PTHR30540">
    <property type="entry name" value="OSMOTIC STRESS POTASSIUM TRANSPORTER"/>
    <property type="match status" value="1"/>
</dbReference>
<dbReference type="Pfam" id="PF02705">
    <property type="entry name" value="K_trans"/>
    <property type="match status" value="1"/>
</dbReference>
<dbReference type="Pfam" id="PF22776">
    <property type="entry name" value="K_trans_C"/>
    <property type="match status" value="1"/>
</dbReference>
<gene>
    <name evidence="1" type="primary">kup</name>
    <name type="ordered locus">LVIS_0875</name>
</gene>
<feature type="chain" id="PRO_0000279789" description="Probable potassium transport system protein Kup">
    <location>
        <begin position="1"/>
        <end position="675"/>
    </location>
</feature>
<feature type="transmembrane region" description="Helical" evidence="1">
    <location>
        <begin position="12"/>
        <end position="32"/>
    </location>
</feature>
<feature type="transmembrane region" description="Helical" evidence="1">
    <location>
        <begin position="55"/>
        <end position="75"/>
    </location>
</feature>
<feature type="transmembrane region" description="Helical" evidence="1">
    <location>
        <begin position="98"/>
        <end position="118"/>
    </location>
</feature>
<feature type="transmembrane region" description="Helical" evidence="1">
    <location>
        <begin position="143"/>
        <end position="163"/>
    </location>
</feature>
<feature type="transmembrane region" description="Helical" evidence="1">
    <location>
        <begin position="170"/>
        <end position="190"/>
    </location>
</feature>
<feature type="transmembrane region" description="Helical" evidence="1">
    <location>
        <begin position="216"/>
        <end position="236"/>
    </location>
</feature>
<feature type="transmembrane region" description="Helical" evidence="1">
    <location>
        <begin position="249"/>
        <end position="269"/>
    </location>
</feature>
<feature type="transmembrane region" description="Helical" evidence="1">
    <location>
        <begin position="296"/>
        <end position="316"/>
    </location>
</feature>
<feature type="transmembrane region" description="Helical" evidence="1">
    <location>
        <begin position="345"/>
        <end position="365"/>
    </location>
</feature>
<feature type="transmembrane region" description="Helical" evidence="1">
    <location>
        <begin position="374"/>
        <end position="394"/>
    </location>
</feature>
<feature type="transmembrane region" description="Helical" evidence="1">
    <location>
        <begin position="401"/>
        <end position="421"/>
    </location>
</feature>
<feature type="transmembrane region" description="Helical" evidence="1">
    <location>
        <begin position="428"/>
        <end position="448"/>
    </location>
</feature>
<organism>
    <name type="scientific">Levilactobacillus brevis (strain ATCC 367 / BCRC 12310 / CIP 105137 / JCM 1170 / LMG 11437 / NCIMB 947 / NCTC 947)</name>
    <name type="common">Lactobacillus brevis</name>
    <dbReference type="NCBI Taxonomy" id="387344"/>
    <lineage>
        <taxon>Bacteria</taxon>
        <taxon>Bacillati</taxon>
        <taxon>Bacillota</taxon>
        <taxon>Bacilli</taxon>
        <taxon>Lactobacillales</taxon>
        <taxon>Lactobacillaceae</taxon>
        <taxon>Levilactobacillus</taxon>
    </lineage>
</organism>